<protein>
    <recommendedName>
        <fullName evidence="1">Peptidyl-tRNA hydrolase</fullName>
        <shortName evidence="1">Pth</shortName>
        <ecNumber evidence="1">3.1.1.29</ecNumber>
    </recommendedName>
</protein>
<evidence type="ECO:0000255" key="1">
    <source>
        <dbReference type="HAMAP-Rule" id="MF_00083"/>
    </source>
</evidence>
<sequence length="185" mass="21007">MILVIGLGNPGTEYQYTRHNIGFIAIERIASKYHLSFSIKKKFNCEIAEAVIDRQKIIFIKPTTYMNLSGKSVILVKTYYNIKYEKVFVIHDDIDLEIGRIKFKTGGGNGGHNGLKSIDVVIGNHYNRIRIGIGRPKNNHDVADYVLNNFSESEYKIAMQSIDNIANNFGLILEHKLAEFTNKIV</sequence>
<comment type="function">
    <text evidence="1">Hydrolyzes ribosome-free peptidyl-tRNAs (with 1 or more amino acids incorporated), which drop off the ribosome during protein synthesis, or as a result of ribosome stalling.</text>
</comment>
<comment type="function">
    <text evidence="1">Catalyzes the release of premature peptidyl moieties from peptidyl-tRNA molecules trapped in stalled 50S ribosomal subunits, and thus maintains levels of free tRNAs and 50S ribosomes.</text>
</comment>
<comment type="catalytic activity">
    <reaction evidence="1">
        <text>an N-acyl-L-alpha-aminoacyl-tRNA + H2O = an N-acyl-L-amino acid + a tRNA + H(+)</text>
        <dbReference type="Rhea" id="RHEA:54448"/>
        <dbReference type="Rhea" id="RHEA-COMP:10123"/>
        <dbReference type="Rhea" id="RHEA-COMP:13883"/>
        <dbReference type="ChEBI" id="CHEBI:15377"/>
        <dbReference type="ChEBI" id="CHEBI:15378"/>
        <dbReference type="ChEBI" id="CHEBI:59874"/>
        <dbReference type="ChEBI" id="CHEBI:78442"/>
        <dbReference type="ChEBI" id="CHEBI:138191"/>
        <dbReference type="EC" id="3.1.1.29"/>
    </reaction>
</comment>
<comment type="subunit">
    <text evidence="1">Monomer.</text>
</comment>
<comment type="subcellular location">
    <subcellularLocation>
        <location evidence="1">Cytoplasm</location>
    </subcellularLocation>
</comment>
<comment type="similarity">
    <text evidence="1">Belongs to the PTH family.</text>
</comment>
<proteinExistence type="inferred from homology"/>
<keyword id="KW-0963">Cytoplasm</keyword>
<keyword id="KW-0378">Hydrolase</keyword>
<keyword id="KW-1185">Reference proteome</keyword>
<keyword id="KW-0694">RNA-binding</keyword>
<keyword id="KW-0820">tRNA-binding</keyword>
<feature type="chain" id="PRO_0000187805" description="Peptidyl-tRNA hydrolase">
    <location>
        <begin position="1"/>
        <end position="185"/>
    </location>
</feature>
<feature type="active site" description="Proton acceptor" evidence="1">
    <location>
        <position position="19"/>
    </location>
</feature>
<feature type="binding site" evidence="1">
    <location>
        <position position="14"/>
    </location>
    <ligand>
        <name>tRNA</name>
        <dbReference type="ChEBI" id="CHEBI:17843"/>
    </ligand>
</feature>
<feature type="binding site" evidence="1">
    <location>
        <position position="65"/>
    </location>
    <ligand>
        <name>tRNA</name>
        <dbReference type="ChEBI" id="CHEBI:17843"/>
    </ligand>
</feature>
<feature type="binding site" evidence="1">
    <location>
        <position position="67"/>
    </location>
    <ligand>
        <name>tRNA</name>
        <dbReference type="ChEBI" id="CHEBI:17843"/>
    </ligand>
</feature>
<feature type="binding site" evidence="1">
    <location>
        <position position="113"/>
    </location>
    <ligand>
        <name>tRNA</name>
        <dbReference type="ChEBI" id="CHEBI:17843"/>
    </ligand>
</feature>
<feature type="site" description="Discriminates between blocked and unblocked aminoacyl-tRNA" evidence="1">
    <location>
        <position position="9"/>
    </location>
</feature>
<feature type="site" description="Stabilizes the basic form of H active site to accept a proton" evidence="1">
    <location>
        <position position="92"/>
    </location>
</feature>
<accession>Q9ZCV4</accession>
<name>PTH_RICPR</name>
<reference key="1">
    <citation type="journal article" date="1998" name="Nature">
        <title>The genome sequence of Rickettsia prowazekii and the origin of mitochondria.</title>
        <authorList>
            <person name="Andersson S.G.E."/>
            <person name="Zomorodipour A."/>
            <person name="Andersson J.O."/>
            <person name="Sicheritz-Ponten T."/>
            <person name="Alsmark U.C.M."/>
            <person name="Podowski R.M."/>
            <person name="Naeslund A.K."/>
            <person name="Eriksson A.-S."/>
            <person name="Winkler H.H."/>
            <person name="Kurland C.G."/>
        </authorList>
    </citation>
    <scope>NUCLEOTIDE SEQUENCE [LARGE SCALE GENOMIC DNA]</scope>
    <source>
        <strain>Madrid E</strain>
    </source>
</reference>
<organism>
    <name type="scientific">Rickettsia prowazekii (strain Madrid E)</name>
    <dbReference type="NCBI Taxonomy" id="272947"/>
    <lineage>
        <taxon>Bacteria</taxon>
        <taxon>Pseudomonadati</taxon>
        <taxon>Pseudomonadota</taxon>
        <taxon>Alphaproteobacteria</taxon>
        <taxon>Rickettsiales</taxon>
        <taxon>Rickettsiaceae</taxon>
        <taxon>Rickettsieae</taxon>
        <taxon>Rickettsia</taxon>
        <taxon>typhus group</taxon>
    </lineage>
</organism>
<gene>
    <name evidence="1" type="primary">pth</name>
    <name type="ordered locus">RP605</name>
</gene>
<dbReference type="EC" id="3.1.1.29" evidence="1"/>
<dbReference type="EMBL" id="AJ235272">
    <property type="protein sequence ID" value="CAA15049.1"/>
    <property type="molecule type" value="Genomic_DNA"/>
</dbReference>
<dbReference type="PIR" id="G71665">
    <property type="entry name" value="G71665"/>
</dbReference>
<dbReference type="RefSeq" id="NP_220973.1">
    <property type="nucleotide sequence ID" value="NC_000963.1"/>
</dbReference>
<dbReference type="RefSeq" id="WP_004597952.1">
    <property type="nucleotide sequence ID" value="NC_000963.1"/>
</dbReference>
<dbReference type="SMR" id="Q9ZCV4"/>
<dbReference type="STRING" id="272947.gene:17555684"/>
<dbReference type="EnsemblBacteria" id="CAA15049">
    <property type="protein sequence ID" value="CAA15049"/>
    <property type="gene ID" value="CAA15049"/>
</dbReference>
<dbReference type="GeneID" id="57569730"/>
<dbReference type="KEGG" id="rpr:RP605"/>
<dbReference type="PATRIC" id="fig|272947.5.peg.624"/>
<dbReference type="eggNOG" id="COG0193">
    <property type="taxonomic scope" value="Bacteria"/>
</dbReference>
<dbReference type="HOGENOM" id="CLU_062456_2_2_5"/>
<dbReference type="OrthoDB" id="9800507at2"/>
<dbReference type="Proteomes" id="UP000002480">
    <property type="component" value="Chromosome"/>
</dbReference>
<dbReference type="GO" id="GO:0005737">
    <property type="term" value="C:cytoplasm"/>
    <property type="evidence" value="ECO:0007669"/>
    <property type="project" value="UniProtKB-SubCell"/>
</dbReference>
<dbReference type="GO" id="GO:0004045">
    <property type="term" value="F:peptidyl-tRNA hydrolase activity"/>
    <property type="evidence" value="ECO:0007669"/>
    <property type="project" value="UniProtKB-UniRule"/>
</dbReference>
<dbReference type="GO" id="GO:0000049">
    <property type="term" value="F:tRNA binding"/>
    <property type="evidence" value="ECO:0007669"/>
    <property type="project" value="UniProtKB-UniRule"/>
</dbReference>
<dbReference type="GO" id="GO:0006515">
    <property type="term" value="P:protein quality control for misfolded or incompletely synthesized proteins"/>
    <property type="evidence" value="ECO:0007669"/>
    <property type="project" value="UniProtKB-UniRule"/>
</dbReference>
<dbReference type="GO" id="GO:0072344">
    <property type="term" value="P:rescue of stalled ribosome"/>
    <property type="evidence" value="ECO:0007669"/>
    <property type="project" value="UniProtKB-UniRule"/>
</dbReference>
<dbReference type="CDD" id="cd00462">
    <property type="entry name" value="PTH"/>
    <property type="match status" value="1"/>
</dbReference>
<dbReference type="FunFam" id="3.40.50.1470:FF:000001">
    <property type="entry name" value="Peptidyl-tRNA hydrolase"/>
    <property type="match status" value="1"/>
</dbReference>
<dbReference type="Gene3D" id="3.40.50.1470">
    <property type="entry name" value="Peptidyl-tRNA hydrolase"/>
    <property type="match status" value="1"/>
</dbReference>
<dbReference type="HAMAP" id="MF_00083">
    <property type="entry name" value="Pept_tRNA_hydro_bact"/>
    <property type="match status" value="1"/>
</dbReference>
<dbReference type="InterPro" id="IPR001328">
    <property type="entry name" value="Pept_tRNA_hydro"/>
</dbReference>
<dbReference type="InterPro" id="IPR018171">
    <property type="entry name" value="Pept_tRNA_hydro_CS"/>
</dbReference>
<dbReference type="InterPro" id="IPR036416">
    <property type="entry name" value="Pept_tRNA_hydro_sf"/>
</dbReference>
<dbReference type="NCBIfam" id="TIGR00447">
    <property type="entry name" value="pth"/>
    <property type="match status" value="1"/>
</dbReference>
<dbReference type="PANTHER" id="PTHR17224">
    <property type="entry name" value="PEPTIDYL-TRNA HYDROLASE"/>
    <property type="match status" value="1"/>
</dbReference>
<dbReference type="PANTHER" id="PTHR17224:SF1">
    <property type="entry name" value="PEPTIDYL-TRNA HYDROLASE"/>
    <property type="match status" value="1"/>
</dbReference>
<dbReference type="Pfam" id="PF01195">
    <property type="entry name" value="Pept_tRNA_hydro"/>
    <property type="match status" value="1"/>
</dbReference>
<dbReference type="SUPFAM" id="SSF53178">
    <property type="entry name" value="Peptidyl-tRNA hydrolase-like"/>
    <property type="match status" value="1"/>
</dbReference>
<dbReference type="PROSITE" id="PS01195">
    <property type="entry name" value="PEPT_TRNA_HYDROL_1"/>
    <property type="match status" value="1"/>
</dbReference>
<dbReference type="PROSITE" id="PS01196">
    <property type="entry name" value="PEPT_TRNA_HYDROL_2"/>
    <property type="match status" value="1"/>
</dbReference>